<feature type="chain" id="PRO_0000216876" description="N-acyl-aromatic-L-amino acid amidohydrolase (carboxylate-forming)">
    <location>
        <begin position="1"/>
        <end position="318"/>
    </location>
</feature>
<feature type="region of interest" description="Hydrolytic domain">
    <location>
        <begin position="1"/>
        <end position="210"/>
    </location>
</feature>
<feature type="region of interest" description="Shielding domain">
    <location>
        <begin position="211"/>
        <end position="318"/>
    </location>
</feature>
<feature type="binding site">
    <location>
        <position position="21"/>
    </location>
    <ligand>
        <name>Zn(2+)</name>
        <dbReference type="ChEBI" id="CHEBI:29105"/>
    </ligand>
</feature>
<feature type="binding site">
    <location>
        <position position="24"/>
    </location>
    <ligand>
        <name>Zn(2+)</name>
        <dbReference type="ChEBI" id="CHEBI:29105"/>
    </ligand>
</feature>
<feature type="binding site">
    <location>
        <position position="63"/>
    </location>
    <ligand>
        <name>substrate</name>
    </ligand>
</feature>
<feature type="binding site">
    <location>
        <begin position="70"/>
        <end position="71"/>
    </location>
    <ligand>
        <name>substrate</name>
    </ligand>
</feature>
<feature type="binding site">
    <location>
        <position position="116"/>
    </location>
    <ligand>
        <name>Zn(2+)</name>
        <dbReference type="ChEBI" id="CHEBI:29105"/>
    </ligand>
</feature>
<feature type="binding site">
    <location>
        <position position="177"/>
    </location>
    <ligand>
        <name>substrate</name>
    </ligand>
</feature>
<feature type="binding site">
    <location>
        <position position="287"/>
    </location>
    <ligand>
        <name>substrate</name>
    </ligand>
</feature>
<feature type="modified residue" description="Phosphothreonine" evidence="1">
    <location>
        <position position="317"/>
    </location>
</feature>
<feature type="mutagenesis site" description="Abolishes activity." evidence="5">
    <original>R</original>
    <variation>A</variation>
    <location>
        <position position="63"/>
    </location>
</feature>
<feature type="mutagenesis site" description="Drastically reduced activity." evidence="5">
    <original>Y</original>
    <variation>A</variation>
    <location>
        <position position="287"/>
    </location>
</feature>
<feature type="sequence conflict" description="In Ref. 3; AAN87897, 4; AAM46090 and 5; BAB21963." evidence="6" ref="3 4 5">
    <original>D</original>
    <variation>G</variation>
    <location>
        <position position="66"/>
    </location>
</feature>
<feature type="strand" evidence="7">
    <location>
        <begin position="13"/>
        <end position="18"/>
    </location>
</feature>
<feature type="helix" evidence="7">
    <location>
        <begin position="25"/>
        <end position="36"/>
    </location>
</feature>
<feature type="helix" evidence="7">
    <location>
        <begin position="38"/>
        <end position="41"/>
    </location>
</feature>
<feature type="strand" evidence="7">
    <location>
        <begin position="46"/>
        <end position="53"/>
    </location>
</feature>
<feature type="helix" evidence="7">
    <location>
        <begin position="55"/>
        <end position="60"/>
    </location>
</feature>
<feature type="strand" evidence="7">
    <location>
        <begin position="65"/>
        <end position="67"/>
    </location>
</feature>
<feature type="helix" evidence="7">
    <location>
        <begin position="69"/>
        <end position="71"/>
    </location>
</feature>
<feature type="helix" evidence="7">
    <location>
        <begin position="75"/>
        <end position="78"/>
    </location>
</feature>
<feature type="strand" evidence="8">
    <location>
        <begin position="84"/>
        <end position="86"/>
    </location>
</feature>
<feature type="helix" evidence="7">
    <location>
        <begin position="88"/>
        <end position="100"/>
    </location>
</feature>
<feature type="strand" evidence="7">
    <location>
        <begin position="110"/>
        <end position="117"/>
    </location>
</feature>
<feature type="strand" evidence="8">
    <location>
        <begin position="119"/>
        <end position="121"/>
    </location>
</feature>
<feature type="strand" evidence="7">
    <location>
        <begin position="123"/>
        <end position="130"/>
    </location>
</feature>
<feature type="helix" evidence="7">
    <location>
        <begin position="133"/>
        <end position="145"/>
    </location>
</feature>
<feature type="strand" evidence="7">
    <location>
        <begin position="151"/>
        <end position="155"/>
    </location>
</feature>
<feature type="strand" evidence="8">
    <location>
        <begin position="159"/>
        <end position="161"/>
    </location>
</feature>
<feature type="helix" evidence="7">
    <location>
        <begin position="167"/>
        <end position="169"/>
    </location>
</feature>
<feature type="strand" evidence="7">
    <location>
        <begin position="170"/>
        <end position="179"/>
    </location>
</feature>
<feature type="helix" evidence="7">
    <location>
        <begin position="188"/>
        <end position="209"/>
    </location>
</feature>
<feature type="strand" evidence="7">
    <location>
        <begin position="217"/>
        <end position="228"/>
    </location>
</feature>
<feature type="strand" evidence="7">
    <location>
        <begin position="238"/>
        <end position="242"/>
    </location>
</feature>
<feature type="turn" evidence="7">
    <location>
        <begin position="244"/>
        <end position="248"/>
    </location>
</feature>
<feature type="strand" evidence="7">
    <location>
        <begin position="258"/>
        <end position="263"/>
    </location>
</feature>
<feature type="strand" evidence="7">
    <location>
        <begin position="268"/>
        <end position="270"/>
    </location>
</feature>
<feature type="strand" evidence="9">
    <location>
        <begin position="273"/>
        <end position="275"/>
    </location>
</feature>
<feature type="strand" evidence="8">
    <location>
        <begin position="277"/>
        <end position="281"/>
    </location>
</feature>
<feature type="helix" evidence="7">
    <location>
        <begin position="285"/>
        <end position="287"/>
    </location>
</feature>
<feature type="turn" evidence="7">
    <location>
        <begin position="288"/>
        <end position="291"/>
    </location>
</feature>
<feature type="strand" evidence="7">
    <location>
        <begin position="293"/>
        <end position="304"/>
    </location>
</feature>
<protein>
    <recommendedName>
        <fullName>N-acyl-aromatic-L-amino acid amidohydrolase (carboxylate-forming)</fullName>
        <ecNumber>3.5.1.114</ecNumber>
    </recommendedName>
    <alternativeName>
        <fullName>Acylase III</fullName>
    </alternativeName>
    <alternativeName>
        <fullName>Aminoacylase III</fullName>
        <shortName>AAIII</shortName>
    </alternativeName>
    <alternativeName>
        <fullName>Aminoacylase-3</fullName>
        <shortName>ACY-3</shortName>
    </alternativeName>
    <alternativeName>
        <fullName>Aspartoacylase-2</fullName>
    </alternativeName>
    <alternativeName>
        <fullName>Hepatitis C virus core-binding protein 1</fullName>
        <shortName>HCBP1</shortName>
    </alternativeName>
</protein>
<evidence type="ECO:0000250" key="1">
    <source>
        <dbReference type="UniProtKB" id="Q5M876"/>
    </source>
</evidence>
<evidence type="ECO:0000269" key="2">
    <source>
    </source>
</evidence>
<evidence type="ECO:0000269" key="3">
    <source>
    </source>
</evidence>
<evidence type="ECO:0000269" key="4">
    <source>
    </source>
</evidence>
<evidence type="ECO:0000269" key="5">
    <source>
    </source>
</evidence>
<evidence type="ECO:0000305" key="6"/>
<evidence type="ECO:0007829" key="7">
    <source>
        <dbReference type="PDB" id="3NH4"/>
    </source>
</evidence>
<evidence type="ECO:0007829" key="8">
    <source>
        <dbReference type="PDB" id="3NH5"/>
    </source>
</evidence>
<evidence type="ECO:0007829" key="9">
    <source>
        <dbReference type="PDB" id="3NH8"/>
    </source>
</evidence>
<proteinExistence type="evidence at protein level"/>
<comment type="function">
    <text evidence="2 3">Plays an important role in deacetylating mercapturic acids in kidney proximal tubules. Also acts on N-acetyl-aromatic amino acids.</text>
</comment>
<comment type="catalytic activity">
    <reaction>
        <text>an N-acyl-aromatic L-alpha-amino acid + H2O = an aromatic L-alpha-amino acid + a carboxylate</text>
        <dbReference type="Rhea" id="RHEA:54184"/>
        <dbReference type="ChEBI" id="CHEBI:15377"/>
        <dbReference type="ChEBI" id="CHEBI:29067"/>
        <dbReference type="ChEBI" id="CHEBI:84824"/>
        <dbReference type="ChEBI" id="CHEBI:138093"/>
        <dbReference type="EC" id="3.5.1.114"/>
    </reaction>
</comment>
<comment type="catalytic activity">
    <reaction>
        <text>an N-acetyl-L-cysteine-S-conjugate + H2O = an S-substituted L-cysteine + acetate</text>
        <dbReference type="Rhea" id="RHEA:36855"/>
        <dbReference type="ChEBI" id="CHEBI:15377"/>
        <dbReference type="ChEBI" id="CHEBI:30089"/>
        <dbReference type="ChEBI" id="CHEBI:58717"/>
        <dbReference type="ChEBI" id="CHEBI:58718"/>
        <dbReference type="EC" id="3.5.1.114"/>
    </reaction>
</comment>
<comment type="cofactor">
    <cofactor evidence="5">
        <name>Zn(2+)</name>
        <dbReference type="ChEBI" id="CHEBI:29105"/>
    </cofactor>
    <text evidence="5">Binds 1 zinc ion per subunit.</text>
</comment>
<comment type="biophysicochemical properties">
    <kinetics>
        <KM evidence="2">1.1 mM for S-benzyl-N-acetyl-L-cysteine</KM>
        <KM evidence="2">1.8 mM for N-acetyl-L-histidine</KM>
        <KM evidence="2">1.4 mM for N-acetyl-L-tyrosine</KM>
        <KM evidence="2">1.6 mM for N-acetyl-L-phenylalanine</KM>
        <Vmax evidence="2">11.7 umol/min/mg enzyme with S-benzyl-N-acetyl-L-cysteine as substrate</Vmax>
        <Vmax evidence="2">5.9 umol/min/mg enzyme with N-acetyl-L-histidine as substrate</Vmax>
        <Vmax evidence="2">7.5 umol/min/mg enzyme with N-acetyl-L-tyrosine as substrate</Vmax>
        <Vmax evidence="2">7.9 umol/min/mg enzyme with N-acetyl-L-phenylalanine as substrate</Vmax>
    </kinetics>
    <phDependence>
        <text evidence="2">Optimum pH is 7.5 with S-benzyl-N-acetyl-L-cysteine as substrate, 7.6 with N-acetyl-L-histidine as substrate, 7.6 with N-acetyl-L-tyrosine as substrate, and 7.7 with N-acetyl-L-phenylalanine as substrate.</text>
    </phDependence>
</comment>
<comment type="subunit">
    <text evidence="2 4 5">Exists as a mixture of homodimers and homotetramer, both catalytically active.</text>
</comment>
<comment type="interaction">
    <interactant intactId="EBI-7378963">
        <id>Q91XE4</id>
    </interactant>
    <interactant intactId="EBI-7378963">
        <id>Q91XE4</id>
        <label>Acy3</label>
    </interactant>
    <organismsDiffer>false</organismsDiffer>
    <experiments>4</experiments>
</comment>
<comment type="interaction">
    <interactant intactId="EBI-7378963">
        <id>Q91XE4</id>
    </interactant>
    <interactant intactId="EBI-6941357">
        <id>P26664</id>
    </interactant>
    <organismsDiffer>true</organismsDiffer>
    <experiments>6</experiments>
</comment>
<comment type="subcellular location">
    <subcellularLocation>
        <location evidence="2">Apical cell membrane</location>
        <topology evidence="2">Peripheral membrane protein</topology>
    </subcellularLocation>
    <subcellularLocation>
        <location evidence="2">Cytoplasm</location>
    </subcellularLocation>
    <text>Predominantly localized in the apical membrane of cells in the S1 segment. In the proximal straight tubules (S2 and S3 segments) is expressed diffusely throughout the cytoplasm.</text>
</comment>
<comment type="tissue specificity">
    <text evidence="2">Expressed predominantly in kidney and to a lesser extent in liver. Weakly expressed in heart, small intestine, brain, lung, testis, and stomach.</text>
</comment>
<comment type="similarity">
    <text evidence="6">Belongs to the AspA/AstE family. Aspartoacylase subfamily.</text>
</comment>
<name>ACY3_MOUSE</name>
<accession>Q91XE4</accession>
<accession>Q3UP59</accession>
<accession>Q9DD17</accession>
<organism>
    <name type="scientific">Mus musculus</name>
    <name type="common">Mouse</name>
    <dbReference type="NCBI Taxonomy" id="10090"/>
    <lineage>
        <taxon>Eukaryota</taxon>
        <taxon>Metazoa</taxon>
        <taxon>Chordata</taxon>
        <taxon>Craniata</taxon>
        <taxon>Vertebrata</taxon>
        <taxon>Euteleostomi</taxon>
        <taxon>Mammalia</taxon>
        <taxon>Eutheria</taxon>
        <taxon>Euarchontoglires</taxon>
        <taxon>Glires</taxon>
        <taxon>Rodentia</taxon>
        <taxon>Myomorpha</taxon>
        <taxon>Muroidea</taxon>
        <taxon>Muridae</taxon>
        <taxon>Murinae</taxon>
        <taxon>Mus</taxon>
        <taxon>Mus</taxon>
    </lineage>
</organism>
<reference key="1">
    <citation type="submission" date="2001-03" db="EMBL/GenBank/DDBJ databases">
        <title>The mouse aspartoacylase-3 gene (ACY-3) generates two mRNA isoforms by alternative splicing of 5' untranslated region.</title>
        <authorList>
            <person name="Chen H."/>
            <person name="Peng J."/>
            <person name="Huang C.-H."/>
        </authorList>
    </citation>
    <scope>NUCLEOTIDE SEQUENCE [MRNA]</scope>
    <source>
        <strain>BALB/cJ</strain>
        <tissue>Kidney</tissue>
    </source>
</reference>
<reference key="2">
    <citation type="submission" date="2001-06" db="EMBL/GenBank/DDBJ databases">
        <title>Identification of a novel aspartoacylase homolog (ACY-3) in human and mouse kidneys.</title>
        <authorList>
            <person name="Huang C.-H."/>
            <person name="Chen H."/>
            <person name="Peng J."/>
            <person name="Chen Y."/>
        </authorList>
    </citation>
    <scope>NUCLEOTIDE SEQUENCE [GENOMIC DNA]</scope>
    <source>
        <strain>BALB/cJ</strain>
    </source>
</reference>
<reference key="3">
    <citation type="journal article" date="2004" name="Am. J. Physiol.">
        <title>Structural characterization, tissue distribution, and functional expression of murine aminoacylase III.</title>
        <authorList>
            <person name="Pushkin A."/>
            <person name="Carpenito G."/>
            <person name="Abuladze N."/>
            <person name="Newman D."/>
            <person name="Tsuprun V."/>
            <person name="Ryazantsev S."/>
            <person name="Motemoturu S."/>
            <person name="Sassani P."/>
            <person name="Solovieva N."/>
            <person name="Dukkipati R."/>
            <person name="Kurtz I."/>
        </authorList>
    </citation>
    <scope>NUCLEOTIDE SEQUENCE [MRNA]</scope>
    <scope>FUNCTION</scope>
    <scope>CATALYTIC ACTIVITY</scope>
    <scope>BIOPHYSICOCHEMICAL PROPERTIES</scope>
    <scope>SUBUNIT</scope>
    <scope>SUBCELLULAR LOCATION</scope>
    <scope>TISSUE SPECIFICITY</scope>
    <source>
        <strain>C57BL/6J</strain>
    </source>
</reference>
<reference key="4">
    <citation type="submission" date="2001-05" db="EMBL/GenBank/DDBJ databases">
        <title>Cloning and sequence analysis of cDNA encoding hepatitis C virus core-binding protein 1 (HCBP1) from mouse.</title>
        <authorList>
            <person name="Li K."/>
            <person name="Cheng J."/>
            <person name="Zhang L."/>
            <person name="Wang L."/>
            <person name="Lu Y."/>
            <person name="Wang G."/>
            <person name="Liu Y."/>
        </authorList>
    </citation>
    <scope>NUCLEOTIDE SEQUENCE [MRNA]</scope>
</reference>
<reference key="5">
    <citation type="journal article" date="2005" name="Science">
        <title>The transcriptional landscape of the mammalian genome.</title>
        <authorList>
            <person name="Carninci P."/>
            <person name="Kasukawa T."/>
            <person name="Katayama S."/>
            <person name="Gough J."/>
            <person name="Frith M.C."/>
            <person name="Maeda N."/>
            <person name="Oyama R."/>
            <person name="Ravasi T."/>
            <person name="Lenhard B."/>
            <person name="Wells C."/>
            <person name="Kodzius R."/>
            <person name="Shimokawa K."/>
            <person name="Bajic V.B."/>
            <person name="Brenner S.E."/>
            <person name="Batalov S."/>
            <person name="Forrest A.R."/>
            <person name="Zavolan M."/>
            <person name="Davis M.J."/>
            <person name="Wilming L.G."/>
            <person name="Aidinis V."/>
            <person name="Allen J.E."/>
            <person name="Ambesi-Impiombato A."/>
            <person name="Apweiler R."/>
            <person name="Aturaliya R.N."/>
            <person name="Bailey T.L."/>
            <person name="Bansal M."/>
            <person name="Baxter L."/>
            <person name="Beisel K.W."/>
            <person name="Bersano T."/>
            <person name="Bono H."/>
            <person name="Chalk A.M."/>
            <person name="Chiu K.P."/>
            <person name="Choudhary V."/>
            <person name="Christoffels A."/>
            <person name="Clutterbuck D.R."/>
            <person name="Crowe M.L."/>
            <person name="Dalla E."/>
            <person name="Dalrymple B.P."/>
            <person name="de Bono B."/>
            <person name="Della Gatta G."/>
            <person name="di Bernardo D."/>
            <person name="Down T."/>
            <person name="Engstrom P."/>
            <person name="Fagiolini M."/>
            <person name="Faulkner G."/>
            <person name="Fletcher C.F."/>
            <person name="Fukushima T."/>
            <person name="Furuno M."/>
            <person name="Futaki S."/>
            <person name="Gariboldi M."/>
            <person name="Georgii-Hemming P."/>
            <person name="Gingeras T.R."/>
            <person name="Gojobori T."/>
            <person name="Green R.E."/>
            <person name="Gustincich S."/>
            <person name="Harbers M."/>
            <person name="Hayashi Y."/>
            <person name="Hensch T.K."/>
            <person name="Hirokawa N."/>
            <person name="Hill D."/>
            <person name="Huminiecki L."/>
            <person name="Iacono M."/>
            <person name="Ikeo K."/>
            <person name="Iwama A."/>
            <person name="Ishikawa T."/>
            <person name="Jakt M."/>
            <person name="Kanapin A."/>
            <person name="Katoh M."/>
            <person name="Kawasawa Y."/>
            <person name="Kelso J."/>
            <person name="Kitamura H."/>
            <person name="Kitano H."/>
            <person name="Kollias G."/>
            <person name="Krishnan S.P."/>
            <person name="Kruger A."/>
            <person name="Kummerfeld S.K."/>
            <person name="Kurochkin I.V."/>
            <person name="Lareau L.F."/>
            <person name="Lazarevic D."/>
            <person name="Lipovich L."/>
            <person name="Liu J."/>
            <person name="Liuni S."/>
            <person name="McWilliam S."/>
            <person name="Madan Babu M."/>
            <person name="Madera M."/>
            <person name="Marchionni L."/>
            <person name="Matsuda H."/>
            <person name="Matsuzawa S."/>
            <person name="Miki H."/>
            <person name="Mignone F."/>
            <person name="Miyake S."/>
            <person name="Morris K."/>
            <person name="Mottagui-Tabar S."/>
            <person name="Mulder N."/>
            <person name="Nakano N."/>
            <person name="Nakauchi H."/>
            <person name="Ng P."/>
            <person name="Nilsson R."/>
            <person name="Nishiguchi S."/>
            <person name="Nishikawa S."/>
            <person name="Nori F."/>
            <person name="Ohara O."/>
            <person name="Okazaki Y."/>
            <person name="Orlando V."/>
            <person name="Pang K.C."/>
            <person name="Pavan W.J."/>
            <person name="Pavesi G."/>
            <person name="Pesole G."/>
            <person name="Petrovsky N."/>
            <person name="Piazza S."/>
            <person name="Reed J."/>
            <person name="Reid J.F."/>
            <person name="Ring B.Z."/>
            <person name="Ringwald M."/>
            <person name="Rost B."/>
            <person name="Ruan Y."/>
            <person name="Salzberg S.L."/>
            <person name="Sandelin A."/>
            <person name="Schneider C."/>
            <person name="Schoenbach C."/>
            <person name="Sekiguchi K."/>
            <person name="Semple C.A."/>
            <person name="Seno S."/>
            <person name="Sessa L."/>
            <person name="Sheng Y."/>
            <person name="Shibata Y."/>
            <person name="Shimada H."/>
            <person name="Shimada K."/>
            <person name="Silva D."/>
            <person name="Sinclair B."/>
            <person name="Sperling S."/>
            <person name="Stupka E."/>
            <person name="Sugiura K."/>
            <person name="Sultana R."/>
            <person name="Takenaka Y."/>
            <person name="Taki K."/>
            <person name="Tammoja K."/>
            <person name="Tan S.L."/>
            <person name="Tang S."/>
            <person name="Taylor M.S."/>
            <person name="Tegner J."/>
            <person name="Teichmann S.A."/>
            <person name="Ueda H.R."/>
            <person name="van Nimwegen E."/>
            <person name="Verardo R."/>
            <person name="Wei C.L."/>
            <person name="Yagi K."/>
            <person name="Yamanishi H."/>
            <person name="Zabarovsky E."/>
            <person name="Zhu S."/>
            <person name="Zimmer A."/>
            <person name="Hide W."/>
            <person name="Bult C."/>
            <person name="Grimmond S.M."/>
            <person name="Teasdale R.D."/>
            <person name="Liu E.T."/>
            <person name="Brusic V."/>
            <person name="Quackenbush J."/>
            <person name="Wahlestedt C."/>
            <person name="Mattick J.S."/>
            <person name="Hume D.A."/>
            <person name="Kai C."/>
            <person name="Sasaki D."/>
            <person name="Tomaru Y."/>
            <person name="Fukuda S."/>
            <person name="Kanamori-Katayama M."/>
            <person name="Suzuki M."/>
            <person name="Aoki J."/>
            <person name="Arakawa T."/>
            <person name="Iida J."/>
            <person name="Imamura K."/>
            <person name="Itoh M."/>
            <person name="Kato T."/>
            <person name="Kawaji H."/>
            <person name="Kawagashira N."/>
            <person name="Kawashima T."/>
            <person name="Kojima M."/>
            <person name="Kondo S."/>
            <person name="Konno H."/>
            <person name="Nakano K."/>
            <person name="Ninomiya N."/>
            <person name="Nishio T."/>
            <person name="Okada M."/>
            <person name="Plessy C."/>
            <person name="Shibata K."/>
            <person name="Shiraki T."/>
            <person name="Suzuki S."/>
            <person name="Tagami M."/>
            <person name="Waki K."/>
            <person name="Watahiki A."/>
            <person name="Okamura-Oho Y."/>
            <person name="Suzuki H."/>
            <person name="Kawai J."/>
            <person name="Hayashizaki Y."/>
        </authorList>
    </citation>
    <scope>NUCLEOTIDE SEQUENCE [LARGE SCALE MRNA]</scope>
    <source>
        <strain>C57BL/6J</strain>
        <tissue>Kidney</tissue>
        <tissue>Spleen</tissue>
    </source>
</reference>
<reference key="6">
    <citation type="journal article" date="2004" name="Genome Res.">
        <title>The status, quality, and expansion of the NIH full-length cDNA project: the Mammalian Gene Collection (MGC).</title>
        <authorList>
            <consortium name="The MGC Project Team"/>
        </authorList>
    </citation>
    <scope>NUCLEOTIDE SEQUENCE [LARGE SCALE MRNA]</scope>
    <source>
        <tissue>Kidney</tissue>
    </source>
</reference>
<reference key="7">
    <citation type="journal article" date="2007" name="Drug Metab. Dispos.">
        <title>Specificity of aminoacylase III-mediated deacetylation of mercapturic acids.</title>
        <authorList>
            <person name="Newman D."/>
            <person name="Abuladze N."/>
            <person name="Scholz K."/>
            <person name="Dekant W."/>
            <person name="Tsuprun V."/>
            <person name="Ryazantsev S."/>
            <person name="Bondar G."/>
            <person name="Sassani P."/>
            <person name="Kurtz I."/>
            <person name="Pushkin A."/>
        </authorList>
    </citation>
    <scope>FUNCTION</scope>
    <scope>CATALYTIC ACTIVITY</scope>
    <scope>SUBSTRATE SPECIFICITY</scope>
</reference>
<reference key="8">
    <citation type="journal article" date="2010" name="Cell">
        <title>A tissue-specific atlas of mouse protein phosphorylation and expression.</title>
        <authorList>
            <person name="Huttlin E.L."/>
            <person name="Jedrychowski M.P."/>
            <person name="Elias J.E."/>
            <person name="Goswami T."/>
            <person name="Rad R."/>
            <person name="Beausoleil S.A."/>
            <person name="Villen J."/>
            <person name="Haas W."/>
            <person name="Sowa M.E."/>
            <person name="Gygi S.P."/>
        </authorList>
    </citation>
    <scope>IDENTIFICATION BY MASS SPECTROMETRY [LARGE SCALE ANALYSIS]</scope>
    <source>
        <tissue>Brain</tissue>
        <tissue>Brown adipose tissue</tissue>
        <tissue>Heart</tissue>
        <tissue>Kidney</tissue>
        <tissue>Liver</tissue>
        <tissue>Lung</tissue>
        <tissue>Spleen</tissue>
        <tissue>Testis</tissue>
    </source>
</reference>
<reference key="9">
    <citation type="journal article" date="2007" name="FEBS Lett.">
        <title>Structural characterization of dimeric murine aminoacylase III.</title>
        <authorList>
            <person name="Ryazantsev S."/>
            <person name="Abuladze N."/>
            <person name="Newman D."/>
            <person name="Bondar G."/>
            <person name="Kurtz I."/>
            <person name="Pushkin A."/>
        </authorList>
    </citation>
    <scope>STRUCTURE BY ELECTRON MICROSCOPY (16 ANGSTROMS)</scope>
    <scope>SUBUNIT</scope>
</reference>
<reference key="10">
    <citation type="journal article" date="2010" name="Proc. Natl. Acad. Sci. U.S.A.">
        <title>Structures of aminoacylase 3 in complex with acetylated substrates.</title>
        <authorList>
            <person name="Hsieh J.M."/>
            <person name="Tsirulnikov K."/>
            <person name="Sawaya M.R."/>
            <person name="Magilnick N."/>
            <person name="Abuladze N."/>
            <person name="Kurtz I."/>
            <person name="Abramson J."/>
            <person name="Pushkin A."/>
        </authorList>
    </citation>
    <scope>X-RAY CRYSTALLOGRAPHY (2.0 ANGSTROMS) IN COMPLEX WITH SUBSTRATES</scope>
    <scope>ZINC-BINDING SITES</scope>
    <scope>SUBUNIT</scope>
    <scope>COFACTOR</scope>
    <scope>MUTAGENESIS OF ARG-63 AND TYR-287</scope>
</reference>
<sequence length="318" mass="35286">MSSLPGSREPLLRVAVTGGTHGNEMCGVYLARYWLQNPGELQRPSFSAMPVLANPAATAACCRYLDRDLNRSCTLTFLGSTATPDDPYEVKRARELNQLLGPKGTGQAFDFTLDLHNTTANTGVCLISESNISFNLHLCHYLQRQNPGMPCRLFLYEPAGTETFSVESISKNGICLEMGPQPQGVLRADLFSRMRALVASILDFIELFNQGMDLPAFEMDIYRNLGSVDFPRTADGDLAGTVHPQLQDHDFEPLRPGEPIFKLFSGEDVLYEGDSIVYPVFINEAAYYEKHVAFLKSEKIRVTVPALLRLTPRSTQTP</sequence>
<keyword id="KW-0002">3D-structure</keyword>
<keyword id="KW-1003">Cell membrane</keyword>
<keyword id="KW-0963">Cytoplasm</keyword>
<keyword id="KW-0378">Hydrolase</keyword>
<keyword id="KW-0472">Membrane</keyword>
<keyword id="KW-0479">Metal-binding</keyword>
<keyword id="KW-0597">Phosphoprotein</keyword>
<keyword id="KW-1185">Reference proteome</keyword>
<keyword id="KW-0862">Zinc</keyword>
<gene>
    <name type="primary">Acy3</name>
    <name type="synonym">Aspa2</name>
</gene>
<dbReference type="EC" id="3.5.1.114"/>
<dbReference type="EMBL" id="AF356878">
    <property type="protein sequence ID" value="AAM00224.1"/>
    <property type="molecule type" value="mRNA"/>
</dbReference>
<dbReference type="EMBL" id="AF356879">
    <property type="protein sequence ID" value="AAM00225.1"/>
    <property type="molecule type" value="mRNA"/>
</dbReference>
<dbReference type="EMBL" id="AY040762">
    <property type="protein sequence ID" value="AAK94771.1"/>
    <property type="molecule type" value="Genomic_DNA"/>
</dbReference>
<dbReference type="EMBL" id="AY169234">
    <property type="protein sequence ID" value="AAN87897.1"/>
    <property type="molecule type" value="mRNA"/>
</dbReference>
<dbReference type="EMBL" id="AF375479">
    <property type="protein sequence ID" value="AAM46090.1"/>
    <property type="molecule type" value="mRNA"/>
</dbReference>
<dbReference type="EMBL" id="AK002247">
    <property type="protein sequence ID" value="BAB21963.1"/>
    <property type="molecule type" value="mRNA"/>
</dbReference>
<dbReference type="EMBL" id="AK143782">
    <property type="protein sequence ID" value="BAE25538.1"/>
    <property type="molecule type" value="mRNA"/>
</dbReference>
<dbReference type="EMBL" id="BC010795">
    <property type="protein sequence ID" value="AAH10795.1"/>
    <property type="molecule type" value="mRNA"/>
</dbReference>
<dbReference type="CCDS" id="CCDS29406.1"/>
<dbReference type="RefSeq" id="NP_001289408.1">
    <property type="nucleotide sequence ID" value="NM_001302479.1"/>
</dbReference>
<dbReference type="RefSeq" id="NP_001289409.1">
    <property type="nucleotide sequence ID" value="NM_001302480.1"/>
</dbReference>
<dbReference type="RefSeq" id="NP_001289410.1">
    <property type="nucleotide sequence ID" value="NM_001302481.1"/>
</dbReference>
<dbReference type="RefSeq" id="NP_001289411.1">
    <property type="nucleotide sequence ID" value="NM_001302482.1"/>
</dbReference>
<dbReference type="PDB" id="3NFZ">
    <property type="method" value="X-ray"/>
    <property type="resolution" value="2.15 A"/>
    <property type="chains" value="A=1-318"/>
</dbReference>
<dbReference type="PDB" id="3NH4">
    <property type="method" value="X-ray"/>
    <property type="resolution" value="2.00 A"/>
    <property type="chains" value="A=1-318"/>
</dbReference>
<dbReference type="PDB" id="3NH5">
    <property type="method" value="X-ray"/>
    <property type="resolution" value="2.09 A"/>
    <property type="chains" value="A=1-318"/>
</dbReference>
<dbReference type="PDB" id="3NH8">
    <property type="method" value="X-ray"/>
    <property type="resolution" value="2.80 A"/>
    <property type="chains" value="A=1-318"/>
</dbReference>
<dbReference type="PDBsum" id="3NFZ"/>
<dbReference type="PDBsum" id="3NH4"/>
<dbReference type="PDBsum" id="3NH5"/>
<dbReference type="PDBsum" id="3NH8"/>
<dbReference type="SMR" id="Q91XE4"/>
<dbReference type="BioGRID" id="214844">
    <property type="interactions" value="3"/>
</dbReference>
<dbReference type="DIP" id="DIP-44060N"/>
<dbReference type="FunCoup" id="Q91XE4">
    <property type="interactions" value="29"/>
</dbReference>
<dbReference type="IntAct" id="Q91XE4">
    <property type="interactions" value="2"/>
</dbReference>
<dbReference type="MINT" id="Q91XE4"/>
<dbReference type="STRING" id="10090.ENSMUSP00000050056"/>
<dbReference type="GlyGen" id="Q91XE4">
    <property type="glycosylation" value="1 site"/>
</dbReference>
<dbReference type="iPTMnet" id="Q91XE4"/>
<dbReference type="PhosphoSitePlus" id="Q91XE4"/>
<dbReference type="jPOST" id="Q91XE4"/>
<dbReference type="PaxDb" id="10090-ENSMUSP00000050056"/>
<dbReference type="PeptideAtlas" id="Q91XE4"/>
<dbReference type="ProteomicsDB" id="285600"/>
<dbReference type="Pumba" id="Q91XE4"/>
<dbReference type="Antibodypedia" id="30490">
    <property type="antibodies" value="302 antibodies from 25 providers"/>
</dbReference>
<dbReference type="DNASU" id="71670"/>
<dbReference type="Ensembl" id="ENSMUST00000054030.8">
    <property type="protein sequence ID" value="ENSMUSP00000050056.8"/>
    <property type="gene ID" value="ENSMUSG00000024866.11"/>
</dbReference>
<dbReference type="Ensembl" id="ENSMUST00000235612.2">
    <property type="protein sequence ID" value="ENSMUSP00000158093.2"/>
    <property type="gene ID" value="ENSMUSG00000024866.11"/>
</dbReference>
<dbReference type="Ensembl" id="ENSMUST00000236510.2">
    <property type="protein sequence ID" value="ENSMUSP00000158512.2"/>
    <property type="gene ID" value="ENSMUSG00000024866.11"/>
</dbReference>
<dbReference type="GeneID" id="71670"/>
<dbReference type="KEGG" id="mmu:71670"/>
<dbReference type="UCSC" id="uc008fxx.2">
    <property type="organism name" value="mouse"/>
</dbReference>
<dbReference type="AGR" id="MGI:1918920"/>
<dbReference type="CTD" id="91703"/>
<dbReference type="MGI" id="MGI:1918920">
    <property type="gene designation" value="Acy3"/>
</dbReference>
<dbReference type="VEuPathDB" id="HostDB:ENSMUSG00000024866"/>
<dbReference type="eggNOG" id="ENOG502QRAK">
    <property type="taxonomic scope" value="Eukaryota"/>
</dbReference>
<dbReference type="GeneTree" id="ENSGT00390000001189"/>
<dbReference type="HOGENOM" id="CLU_083292_0_0_1"/>
<dbReference type="InParanoid" id="Q91XE4"/>
<dbReference type="OMA" id="AMHLCHH"/>
<dbReference type="OrthoDB" id="8300214at2759"/>
<dbReference type="PhylomeDB" id="Q91XE4"/>
<dbReference type="TreeFam" id="TF328708"/>
<dbReference type="BRENDA" id="3.5.1.114">
    <property type="organism ID" value="3474"/>
</dbReference>
<dbReference type="Reactome" id="R-MMU-5423646">
    <property type="pathway name" value="Aflatoxin activation and detoxification"/>
</dbReference>
<dbReference type="BioGRID-ORCS" id="71670">
    <property type="hits" value="3 hits in 77 CRISPR screens"/>
</dbReference>
<dbReference type="EvolutionaryTrace" id="Q91XE4"/>
<dbReference type="PRO" id="PR:Q91XE4"/>
<dbReference type="Proteomes" id="UP000000589">
    <property type="component" value="Chromosome 19"/>
</dbReference>
<dbReference type="RNAct" id="Q91XE4">
    <property type="molecule type" value="protein"/>
</dbReference>
<dbReference type="Bgee" id="ENSMUSG00000024866">
    <property type="expression patterns" value="Expressed in right kidney and 114 other cell types or tissues"/>
</dbReference>
<dbReference type="ExpressionAtlas" id="Q91XE4">
    <property type="expression patterns" value="baseline and differential"/>
</dbReference>
<dbReference type="GO" id="GO:0016324">
    <property type="term" value="C:apical plasma membrane"/>
    <property type="evidence" value="ECO:0000314"/>
    <property type="project" value="MGI"/>
</dbReference>
<dbReference type="GO" id="GO:0005737">
    <property type="term" value="C:cytoplasm"/>
    <property type="evidence" value="ECO:0000314"/>
    <property type="project" value="MGI"/>
</dbReference>
<dbReference type="GO" id="GO:0016020">
    <property type="term" value="C:membrane"/>
    <property type="evidence" value="ECO:0000314"/>
    <property type="project" value="MGI"/>
</dbReference>
<dbReference type="GO" id="GO:0004046">
    <property type="term" value="F:aminoacylase activity"/>
    <property type="evidence" value="ECO:0000314"/>
    <property type="project" value="UniProtKB"/>
</dbReference>
<dbReference type="GO" id="GO:0016788">
    <property type="term" value="F:hydrolase activity, acting on ester bonds"/>
    <property type="evidence" value="ECO:0007669"/>
    <property type="project" value="InterPro"/>
</dbReference>
<dbReference type="GO" id="GO:0042802">
    <property type="term" value="F:identical protein binding"/>
    <property type="evidence" value="ECO:0000314"/>
    <property type="project" value="MGI"/>
</dbReference>
<dbReference type="GO" id="GO:0046872">
    <property type="term" value="F:metal ion binding"/>
    <property type="evidence" value="ECO:0007669"/>
    <property type="project" value="UniProtKB-KW"/>
</dbReference>
<dbReference type="CDD" id="cd06909">
    <property type="entry name" value="M14_ASPA"/>
    <property type="match status" value="1"/>
</dbReference>
<dbReference type="FunFam" id="2.20.25.160:FF:000001">
    <property type="entry name" value="Aspartoacylase"/>
    <property type="match status" value="1"/>
</dbReference>
<dbReference type="FunFam" id="3.40.630.10:FF:000025">
    <property type="entry name" value="aspartoacylase"/>
    <property type="match status" value="1"/>
</dbReference>
<dbReference type="Gene3D" id="2.20.25.160">
    <property type="match status" value="1"/>
</dbReference>
<dbReference type="Gene3D" id="3.40.630.10">
    <property type="entry name" value="Zn peptidases"/>
    <property type="match status" value="1"/>
</dbReference>
<dbReference type="HAMAP" id="MF_00704">
    <property type="entry name" value="Aspartoacylase"/>
    <property type="match status" value="1"/>
</dbReference>
<dbReference type="InterPro" id="IPR050178">
    <property type="entry name" value="AspA/AstE_fam"/>
</dbReference>
<dbReference type="InterPro" id="IPR016708">
    <property type="entry name" value="Aspartoacylase"/>
</dbReference>
<dbReference type="InterPro" id="IPR055438">
    <property type="entry name" value="AstE_AspA_cat"/>
</dbReference>
<dbReference type="InterPro" id="IPR007036">
    <property type="entry name" value="Aste_AspA_hybrid_dom"/>
</dbReference>
<dbReference type="NCBIfam" id="NF002601">
    <property type="entry name" value="PRK02259.1"/>
    <property type="match status" value="1"/>
</dbReference>
<dbReference type="PANTHER" id="PTHR15162">
    <property type="entry name" value="ASPARTOACYLASE"/>
    <property type="match status" value="1"/>
</dbReference>
<dbReference type="PANTHER" id="PTHR15162:SF5">
    <property type="entry name" value="N-ACYL-AROMATIC-L-AMINO ACID AMIDOHYDROLASE (CARBOXYLATE-FORMING)"/>
    <property type="match status" value="1"/>
</dbReference>
<dbReference type="Pfam" id="PF24827">
    <property type="entry name" value="AstE_AspA_cat"/>
    <property type="match status" value="1"/>
</dbReference>
<dbReference type="Pfam" id="PF04952">
    <property type="entry name" value="AstE_AspA_hybrid"/>
    <property type="match status" value="1"/>
</dbReference>
<dbReference type="PIRSF" id="PIRSF018001">
    <property type="entry name" value="Aspartoacylase"/>
    <property type="match status" value="1"/>
</dbReference>
<dbReference type="SUPFAM" id="SSF53187">
    <property type="entry name" value="Zn-dependent exopeptidases"/>
    <property type="match status" value="1"/>
</dbReference>